<proteinExistence type="evidence at protein level"/>
<reference key="1">
    <citation type="journal article" date="1998" name="J. Biol. Chem.">
        <title>A novel glutathione peroxidase in bovine eye. Sequence analysis, mRNA level, and translation.</title>
        <authorList>
            <person name="Singh A.K."/>
            <person name="Shichi H."/>
        </authorList>
    </citation>
    <scope>NUCLEOTIDE SEQUENCE [MRNA]</scope>
    <source>
        <tissue>Ocular ciliary body</tissue>
    </source>
</reference>
<reference key="2">
    <citation type="journal article" date="1999" name="J. Biol. Chem.">
        <title>Phospholipid hydroperoxides are substrates for non-selenium glutathione peroxidase.</title>
        <authorList>
            <person name="Fisher A.B."/>
            <person name="Dodia C."/>
            <person name="Manevich Y."/>
            <person name="Chen J.-W."/>
            <person name="Feinstein S.I."/>
        </authorList>
    </citation>
    <scope>NUCLEOTIDE SEQUENCE [MRNA]</scope>
    <scope>FUNCTION</scope>
    <scope>CATALYTIC ACTIVITY</scope>
    <scope>BIOPHYSICOCHEMICAL PROPERTIES</scope>
    <source>
        <tissue>Lung</tissue>
    </source>
</reference>
<reference key="3">
    <citation type="submission" date="1999-07" db="EMBL/GenBank/DDBJ databases">
        <title>Glutathione peroxidase in the bovine oviduct.</title>
        <authorList>
            <person name="Rojas Garcia P.P."/>
            <person name="Einspanier R."/>
        </authorList>
    </citation>
    <scope>NUCLEOTIDE SEQUENCE [MRNA]</scope>
    <source>
        <tissue>Oviduct</tissue>
    </source>
</reference>
<reference key="4">
    <citation type="journal article" date="2005" name="BMC Genomics">
        <title>Characterization of 954 bovine full-CDS cDNA sequences.</title>
        <authorList>
            <person name="Harhay G.P."/>
            <person name="Sonstegard T.S."/>
            <person name="Keele J.W."/>
            <person name="Heaton M.P."/>
            <person name="Clawson M.L."/>
            <person name="Snelling W.M."/>
            <person name="Wiedmann R.T."/>
            <person name="Van Tassell C.P."/>
            <person name="Smith T.P.L."/>
        </authorList>
    </citation>
    <scope>NUCLEOTIDE SEQUENCE [LARGE SCALE MRNA]</scope>
</reference>
<reference key="5">
    <citation type="submission" date="2005-08" db="EMBL/GenBank/DDBJ databases">
        <authorList>
            <consortium name="NIH - Mammalian Gene Collection (MGC) project"/>
        </authorList>
    </citation>
    <scope>NUCLEOTIDE SEQUENCE [LARGE SCALE MRNA]</scope>
    <source>
        <strain>Crossbred X Angus</strain>
        <tissue>Ileum</tissue>
    </source>
</reference>
<reference key="6">
    <citation type="journal article" date="1990" name="Exp. Eye Res.">
        <title>Non-selenium glutathione peroxidase without glutathione S-transferase activity from bovine ciliary body.</title>
        <authorList>
            <person name="Shichi H."/>
            <person name="Demar J.C."/>
        </authorList>
    </citation>
    <scope>PROTEIN SEQUENCE OF 2-30</scope>
    <scope>FUNCTION</scope>
    <scope>CATALYTIC ACTIVITY</scope>
    <scope>BIOPHYSICOCHEMICAL PROPERTIES</scope>
</reference>
<reference key="7">
    <citation type="journal article" date="1998" name="Comp. Biochem. Physiol.">
        <title>Characterization of acidic Ca(2+)-independent phospholipase A2 of bovine lung.</title>
        <authorList>
            <person name="Akiba S."/>
            <person name="Dodia C."/>
            <person name="Chen X."/>
            <person name="Fisher A.B."/>
        </authorList>
    </citation>
    <scope>PROTEIN SEQUENCE OF 2-16</scope>
    <scope>FUNCTION</scope>
    <scope>CATALYTIC ACTIVITY</scope>
    <scope>BIOPHYSICOCHEMICAL PROPERTIES</scope>
    <scope>COFACTOR</scope>
    <scope>SUBCELLULAR LOCATION</scope>
</reference>
<reference key="8">
    <citation type="journal article" date="2004" name="Proc. Natl. Acad. Sci. U.S.A.">
        <title>Activation of the antioxidant enzyme 1-CYS peroxiredoxin requires glutathionylation mediated by heterodimerization with pi GST.</title>
        <authorList>
            <person name="Manevich Y."/>
            <person name="Feinstein S.I."/>
            <person name="Fisher A.B."/>
        </authorList>
    </citation>
    <scope>INTERACTION WITH GSTP1</scope>
    <scope>ACTIVATION BY GLUTATHIONE</scope>
</reference>
<dbReference type="EC" id="1.11.1.27" evidence="5 7"/>
<dbReference type="EC" id="3.1.1.4" evidence="8"/>
<dbReference type="EC" id="2.3.1.23" evidence="3"/>
<dbReference type="EMBL" id="AF080228">
    <property type="protein sequence ID" value="AAC63016.1"/>
    <property type="molecule type" value="mRNA"/>
</dbReference>
<dbReference type="EMBL" id="AF090194">
    <property type="protein sequence ID" value="AAC84043.1"/>
    <property type="molecule type" value="mRNA"/>
</dbReference>
<dbReference type="EMBL" id="AJ243848">
    <property type="protein sequence ID" value="CAB64802.1"/>
    <property type="molecule type" value="mRNA"/>
</dbReference>
<dbReference type="EMBL" id="BT020967">
    <property type="protein sequence ID" value="AAX08984.1"/>
    <property type="molecule type" value="mRNA"/>
</dbReference>
<dbReference type="EMBL" id="BC102172">
    <property type="protein sequence ID" value="AAI02173.1"/>
    <property type="molecule type" value="mRNA"/>
</dbReference>
<dbReference type="RefSeq" id="NP_777068.1">
    <property type="nucleotide sequence ID" value="NM_174643.1"/>
</dbReference>
<dbReference type="SMR" id="O77834"/>
<dbReference type="FunCoup" id="O77834">
    <property type="interactions" value="960"/>
</dbReference>
<dbReference type="STRING" id="9913.ENSBTAP00000006383"/>
<dbReference type="PeroxiBase" id="4423">
    <property type="entry name" value="Bt1CysPrx"/>
</dbReference>
<dbReference type="SwissPalm" id="O77834"/>
<dbReference type="PaxDb" id="9913-ENSBTAP00000006383"/>
<dbReference type="PeptideAtlas" id="O77834"/>
<dbReference type="Ensembl" id="ENSBTAT00000006383.6">
    <property type="protein sequence ID" value="ENSBTAP00000006383.5"/>
    <property type="gene ID" value="ENSBTAG00000004855.6"/>
</dbReference>
<dbReference type="GeneID" id="282438"/>
<dbReference type="KEGG" id="bta:282438"/>
<dbReference type="CTD" id="9588"/>
<dbReference type="VEuPathDB" id="HostDB:ENSBTAG00000004855"/>
<dbReference type="VGNC" id="VGNC:33304">
    <property type="gene designation" value="PRDX6"/>
</dbReference>
<dbReference type="eggNOG" id="KOG0854">
    <property type="taxonomic scope" value="Eukaryota"/>
</dbReference>
<dbReference type="GeneTree" id="ENSGT00550000074794"/>
<dbReference type="HOGENOM" id="CLU_042529_4_1_1"/>
<dbReference type="InParanoid" id="O77834"/>
<dbReference type="OMA" id="HGPMNIP"/>
<dbReference type="OrthoDB" id="2996783at2759"/>
<dbReference type="TreeFam" id="TF105183"/>
<dbReference type="BRENDA" id="1.11.1.27">
    <property type="organism ID" value="908"/>
</dbReference>
<dbReference type="BRENDA" id="3.1.1.4">
    <property type="organism ID" value="908"/>
</dbReference>
<dbReference type="Reactome" id="R-BTA-3299685">
    <property type="pathway name" value="Detoxification of Reactive Oxygen Species"/>
</dbReference>
<dbReference type="Reactome" id="R-BTA-6798695">
    <property type="pathway name" value="Neutrophil degranulation"/>
</dbReference>
<dbReference type="Proteomes" id="UP000009136">
    <property type="component" value="Chromosome 16"/>
</dbReference>
<dbReference type="Bgee" id="ENSBTAG00000004855">
    <property type="expression patterns" value="Expressed in rumen papilla and 104 other cell types or tissues"/>
</dbReference>
<dbReference type="GO" id="GO:0005737">
    <property type="term" value="C:cytoplasm"/>
    <property type="evidence" value="ECO:0000250"/>
    <property type="project" value="UniProtKB"/>
</dbReference>
<dbReference type="GO" id="GO:0005829">
    <property type="term" value="C:cytosol"/>
    <property type="evidence" value="ECO:0000250"/>
    <property type="project" value="AgBase"/>
</dbReference>
<dbReference type="GO" id="GO:0005764">
    <property type="term" value="C:lysosome"/>
    <property type="evidence" value="ECO:0007669"/>
    <property type="project" value="UniProtKB-SubCell"/>
</dbReference>
<dbReference type="GO" id="GO:0047184">
    <property type="term" value="F:1-acylglycerophosphocholine O-acyltransferase activity"/>
    <property type="evidence" value="ECO:0000250"/>
    <property type="project" value="UniProtKB"/>
</dbReference>
<dbReference type="GO" id="GO:0004601">
    <property type="term" value="F:peroxidase activity"/>
    <property type="evidence" value="ECO:0000250"/>
    <property type="project" value="AgBase"/>
</dbReference>
<dbReference type="GO" id="GO:0051920">
    <property type="term" value="F:peroxiredoxin activity"/>
    <property type="evidence" value="ECO:0007669"/>
    <property type="project" value="InterPro"/>
</dbReference>
<dbReference type="GO" id="GO:0004623">
    <property type="term" value="F:phospholipase A2 activity"/>
    <property type="evidence" value="ECO:0000250"/>
    <property type="project" value="UniProtKB"/>
</dbReference>
<dbReference type="GO" id="GO:0045454">
    <property type="term" value="P:cell redox homeostasis"/>
    <property type="evidence" value="ECO:0000318"/>
    <property type="project" value="GO_Central"/>
</dbReference>
<dbReference type="GO" id="GO:0016042">
    <property type="term" value="P:lipid catabolic process"/>
    <property type="evidence" value="ECO:0007669"/>
    <property type="project" value="UniProtKB-KW"/>
</dbReference>
<dbReference type="GO" id="GO:0000302">
    <property type="term" value="P:response to reactive oxygen species"/>
    <property type="evidence" value="ECO:0000250"/>
    <property type="project" value="AgBase"/>
</dbReference>
<dbReference type="CDD" id="cd03016">
    <property type="entry name" value="PRX_1cys"/>
    <property type="match status" value="1"/>
</dbReference>
<dbReference type="FunFam" id="3.30.1020.10:FF:000001">
    <property type="entry name" value="1-Cys peroxiredoxin"/>
    <property type="match status" value="1"/>
</dbReference>
<dbReference type="FunFam" id="3.40.30.10:FF:000011">
    <property type="entry name" value="Peroxiredoxin PRX1"/>
    <property type="match status" value="1"/>
</dbReference>
<dbReference type="Gene3D" id="3.30.1020.10">
    <property type="entry name" value="Antioxidant, Horf6, Chain A, domain2"/>
    <property type="match status" value="1"/>
</dbReference>
<dbReference type="Gene3D" id="3.40.30.10">
    <property type="entry name" value="Glutaredoxin"/>
    <property type="match status" value="1"/>
</dbReference>
<dbReference type="InterPro" id="IPR000866">
    <property type="entry name" value="AhpC/TSA"/>
</dbReference>
<dbReference type="InterPro" id="IPR024706">
    <property type="entry name" value="Peroxiredoxin_AhpC-typ"/>
</dbReference>
<dbReference type="InterPro" id="IPR019479">
    <property type="entry name" value="Peroxiredoxin_C"/>
</dbReference>
<dbReference type="InterPro" id="IPR045020">
    <property type="entry name" value="PRX_1cys"/>
</dbReference>
<dbReference type="InterPro" id="IPR036249">
    <property type="entry name" value="Thioredoxin-like_sf"/>
</dbReference>
<dbReference type="InterPro" id="IPR013766">
    <property type="entry name" value="Thioredoxin_domain"/>
</dbReference>
<dbReference type="PANTHER" id="PTHR43503">
    <property type="entry name" value="MCG48959-RELATED"/>
    <property type="match status" value="1"/>
</dbReference>
<dbReference type="PANTHER" id="PTHR43503:SF4">
    <property type="entry name" value="PEROXIREDOXIN-6"/>
    <property type="match status" value="1"/>
</dbReference>
<dbReference type="Pfam" id="PF10417">
    <property type="entry name" value="1-cysPrx_C"/>
    <property type="match status" value="1"/>
</dbReference>
<dbReference type="Pfam" id="PF00578">
    <property type="entry name" value="AhpC-TSA"/>
    <property type="match status" value="1"/>
</dbReference>
<dbReference type="PIRSF" id="PIRSF000239">
    <property type="entry name" value="AHPC"/>
    <property type="match status" value="1"/>
</dbReference>
<dbReference type="SUPFAM" id="SSF52833">
    <property type="entry name" value="Thioredoxin-like"/>
    <property type="match status" value="1"/>
</dbReference>
<dbReference type="PROSITE" id="PS51352">
    <property type="entry name" value="THIOREDOXIN_2"/>
    <property type="match status" value="1"/>
</dbReference>
<sequence length="224" mass="25067">MPGGLLLGDEAPNFEANTTIGRIRFHDYLGDSWGILFSHPRDFTPVCTTELGRAAKLAPEFAKRNVKMIALSIDSVEDHLAWSKDINAYNGEEPTEKLPFPIIDDKNRDLAIQLGMLDPAEKDEKGMPVTARVVFIFGPDKKLKLSILYPATTGRNFDEILRVIISLQLTAEKRVATPVDWKNGDSVMVLPTIPEEEAKKLFPKGVFTKELPSGKKYLRYTPQP</sequence>
<keyword id="KW-0007">Acetylation</keyword>
<keyword id="KW-0049">Antioxidant</keyword>
<keyword id="KW-0963">Cytoplasm</keyword>
<keyword id="KW-0903">Direct protein sequencing</keyword>
<keyword id="KW-0378">Hydrolase</keyword>
<keyword id="KW-0442">Lipid degradation</keyword>
<keyword id="KW-0443">Lipid metabolism</keyword>
<keyword id="KW-0458">Lysosome</keyword>
<keyword id="KW-0511">Multifunctional enzyme</keyword>
<keyword id="KW-0560">Oxidoreductase</keyword>
<keyword id="KW-0575">Peroxidase</keyword>
<keyword id="KW-0597">Phosphoprotein</keyword>
<keyword id="KW-0676">Redox-active center</keyword>
<keyword id="KW-1185">Reference proteome</keyword>
<keyword id="KW-0808">Transferase</keyword>
<protein>
    <recommendedName>
        <fullName>Peroxiredoxin-6</fullName>
        <ecNumber evidence="5 7">1.11.1.27</ecNumber>
    </recommendedName>
    <alternativeName>
        <fullName>1-Cys peroxiredoxin</fullName>
        <shortName>1-Cys PRX</shortName>
    </alternativeName>
    <alternativeName>
        <fullName evidence="9">Acidic calcium-independent phospholipase A2</fullName>
        <shortName>aiPLA2</shortName>
        <ecNumber evidence="8">3.1.1.4</ecNumber>
    </alternativeName>
    <alternativeName>
        <fullName>Antioxidant protein 2</fullName>
    </alternativeName>
    <alternativeName>
        <fullName>Ciliary body glutathione peroxidase</fullName>
    </alternativeName>
    <alternativeName>
        <fullName evidence="10">Glutathione-dependent peroxiredoxin</fullName>
    </alternativeName>
    <alternativeName>
        <fullName evidence="3">Lysophosphatidylcholine acyltransferase 5</fullName>
        <shortName>LPC acyltransferase 5</shortName>
        <shortName>LPCAT-5</shortName>
        <shortName>Lyso-PC acyltransferase 5</shortName>
        <ecNumber evidence="3">2.3.1.23</ecNumber>
    </alternativeName>
    <alternativeName>
        <fullName>Non-selenium glutathione peroxidase</fullName>
        <shortName>NSGPx</shortName>
    </alternativeName>
    <alternativeName>
        <fullName>PHGPx</fullName>
    </alternativeName>
</protein>
<gene>
    <name type="primary">PRDX6</name>
    <name type="synonym">AOP2</name>
    <name type="synonym">GPX</name>
    <name type="synonym">PHGPX</name>
</gene>
<evidence type="ECO:0000250" key="1">
    <source>
        <dbReference type="UniProtKB" id="O08709"/>
    </source>
</evidence>
<evidence type="ECO:0000250" key="2">
    <source>
        <dbReference type="UniProtKB" id="O35244"/>
    </source>
</evidence>
<evidence type="ECO:0000250" key="3">
    <source>
        <dbReference type="UniProtKB" id="P30041"/>
    </source>
</evidence>
<evidence type="ECO:0000255" key="4">
    <source>
        <dbReference type="PROSITE-ProRule" id="PRU00691"/>
    </source>
</evidence>
<evidence type="ECO:0000269" key="5">
    <source>
    </source>
</evidence>
<evidence type="ECO:0000269" key="6">
    <source>
    </source>
</evidence>
<evidence type="ECO:0000269" key="7">
    <source>
    </source>
</evidence>
<evidence type="ECO:0000269" key="8">
    <source>
    </source>
</evidence>
<evidence type="ECO:0000303" key="9">
    <source>
    </source>
</evidence>
<evidence type="ECO:0000305" key="10"/>
<evidence type="ECO:0000305" key="11">
    <source>
    </source>
</evidence>
<name>PRDX6_BOVIN</name>
<comment type="function">
    <text evidence="3 5 7 8">Thiol-specific peroxidase that catalyzes the reduction of hydrogen peroxide and organic hydroperoxides to water and alcohols, respectively (PubMed:10409692, PubMed:2373154). Can reduce H(2)O(2) and short chain organic, fatty acid, and phospholipid hydroperoxides (PubMed:10409692). Also has phospholipase activity, and can therefore either reduce the oxidized sn-2 fatty acyl group of phospholipids (peroxidase activity) or hydrolyze the sn-2 ester bond of phospholipids (phospholipase activity) (PubMed:10409692, PubMed:2373154, PubMed:9787801). These activities are dependent on binding to phospholipids at acidic pH and to oxidized phospholipds at cytosolic pH (By similarity). Plays a role in cell protection against oxidative stress by detoxifying peroxides and in phospholipid homeostasis (By similarity). Exhibits acyl-CoA-dependent lysophospholipid acyltransferase which mediates the conversion of lysophosphatidylcholine (1-acyl-sn-glycero-3-phosphocholine or LPC) into phosphatidylcholine (1,2-diacyl-sn-glycero-3-phosphocholine or PC) (By similarity). Shows a clear preference for LPC as the lysophospholipid and for palmitoyl CoA as the fatty acyl substrate (By similarity).</text>
</comment>
<comment type="catalytic activity">
    <reaction evidence="5 7">
        <text>a hydroperoxide + 2 glutathione = an alcohol + glutathione disulfide + H2O</text>
        <dbReference type="Rhea" id="RHEA:62632"/>
        <dbReference type="ChEBI" id="CHEBI:15377"/>
        <dbReference type="ChEBI" id="CHEBI:30879"/>
        <dbReference type="ChEBI" id="CHEBI:35924"/>
        <dbReference type="ChEBI" id="CHEBI:57925"/>
        <dbReference type="ChEBI" id="CHEBI:58297"/>
        <dbReference type="EC" id="1.11.1.27"/>
    </reaction>
</comment>
<comment type="catalytic activity">
    <reaction evidence="8">
        <text>a 1,2-diacyl-sn-glycero-3-phosphocholine + H2O = a 1-acyl-sn-glycero-3-phosphocholine + a fatty acid + H(+)</text>
        <dbReference type="Rhea" id="RHEA:15801"/>
        <dbReference type="ChEBI" id="CHEBI:15377"/>
        <dbReference type="ChEBI" id="CHEBI:15378"/>
        <dbReference type="ChEBI" id="CHEBI:28868"/>
        <dbReference type="ChEBI" id="CHEBI:57643"/>
        <dbReference type="ChEBI" id="CHEBI:58168"/>
        <dbReference type="EC" id="3.1.1.4"/>
    </reaction>
</comment>
<comment type="catalytic activity">
    <reaction evidence="3">
        <text>a 1-acyl-sn-glycero-3-phosphocholine + an acyl-CoA = a 1,2-diacyl-sn-glycero-3-phosphocholine + CoA</text>
        <dbReference type="Rhea" id="RHEA:12937"/>
        <dbReference type="ChEBI" id="CHEBI:57287"/>
        <dbReference type="ChEBI" id="CHEBI:57643"/>
        <dbReference type="ChEBI" id="CHEBI:58168"/>
        <dbReference type="ChEBI" id="CHEBI:58342"/>
        <dbReference type="EC" id="2.3.1.23"/>
    </reaction>
</comment>
<comment type="catalytic activity">
    <reaction evidence="3">
        <text>1-hexadecanoyl-sn-glycero-3-phosphocholine + hexadecanoyl-CoA = 1,2-dihexadecanoyl-sn-glycero-3-phosphocholine + CoA</text>
        <dbReference type="Rhea" id="RHEA:35983"/>
        <dbReference type="ChEBI" id="CHEBI:57287"/>
        <dbReference type="ChEBI" id="CHEBI:57379"/>
        <dbReference type="ChEBI" id="CHEBI:72998"/>
        <dbReference type="ChEBI" id="CHEBI:72999"/>
    </reaction>
    <physiologicalReaction direction="left-to-right" evidence="3">
        <dbReference type="Rhea" id="RHEA:35984"/>
    </physiologicalReaction>
</comment>
<comment type="catalytic activity">
    <reaction evidence="3">
        <text>1,2-dihexadecanoyl-sn-glycero-3-phosphocholine + H2O = 1-hexadecanoyl-sn-glycero-3-phosphocholine + hexadecanoate + H(+)</text>
        <dbReference type="Rhea" id="RHEA:41223"/>
        <dbReference type="ChEBI" id="CHEBI:7896"/>
        <dbReference type="ChEBI" id="CHEBI:15377"/>
        <dbReference type="ChEBI" id="CHEBI:15378"/>
        <dbReference type="ChEBI" id="CHEBI:72998"/>
        <dbReference type="ChEBI" id="CHEBI:72999"/>
    </reaction>
    <physiologicalReaction direction="left-to-right" evidence="3">
        <dbReference type="Rhea" id="RHEA:41224"/>
    </physiologicalReaction>
</comment>
<comment type="cofactor">
    <text evidence="8">Does not need Ca(2+) as cofactor.</text>
</comment>
<comment type="biophysicochemical properties">
    <kinetics>
        <KM evidence="7">25 uM for H(2)O(2)</KM>
        <KM evidence="5">180 uM for H(2)O(2)</KM>
        <KM evidence="7">22 uM for tert-butyl hydroperoxide</KM>
        <KM evidence="5">142 uM for tert-butyl hydroperoxide</KM>
        <KM evidence="7">170 uM for cumene hydroperoxide</KM>
        <KM evidence="5">120 uM for cumene hydroperoxide</KM>
        <KM evidence="7">12 uM for triphenylcarbinyl hydroperoxide</KM>
        <KM evidence="7">34 uM for linoleic hydroperoxide</KM>
        <KM evidence="5">141 uM for linolenoyl hydroperoxide</KM>
        <KM evidence="5">135 uM for arachidonoyl hydroperoxide</KM>
        <KM evidence="5">120 uM for PLCP hydroperoxide</KM>
        <KM evidence="5">129 uM for PACP hydroperoxide</KM>
        <KM evidence="7">22 uM for 5-phenyl-3-pentenyl hydroperoxide</KM>
        <KM evidence="8">350 uM for dipalmitoyl phosphatidylcholine (at pH 4)</KM>
        <Vmax evidence="7">5.07 umol/min/mg enzyme for H(2)O(2)</Vmax>
        <Vmax evidence="5">1810.0 nmol/min/mg enzyme for H(2)O(2)</Vmax>
        <Vmax evidence="7">8.56 umol/min/mg enzyme for tert-butyl hydroperoxide</Vmax>
        <Vmax evidence="5">1270.0 nmol/min/mg enzyme for tert-butyl hydroperoxide</Vmax>
        <Vmax evidence="7">9.18 umol/min/mg enzyme for cumene hydroperoxide</Vmax>
        <Vmax evidence="5">1120.0 nmol/min/mg enzyme for cumene hydroperoxide</Vmax>
        <Vmax evidence="7">2.57 umol/min/mg enzyme for triphenylcarbinyl hydroperoxide</Vmax>
        <Vmax evidence="7">9.88 umol/min/mg enzyme for linoleic hydroperoxide</Vmax>
        <Vmax evidence="5">1390.0 nmol/min/mg enzyme for linolenoyl hydroperoxide</Vmax>
        <Vmax evidence="7">7.34 umol/min/mg enzyme for 5-phenyl-3-pentenyl hydroperoxide</Vmax>
        <Vmax evidence="5">1380.0 nmol/min/mg enzyme for arachidonoyl hydroperoxide</Vmax>
        <Vmax evidence="5">1500.0 nmol/min/mg enzyme for PLCP hydroperoxide</Vmax>
        <Vmax evidence="5">1640.0 nmol/min/mg enzyme for PACP hydroperoxide</Vmax>
        <Vmax evidence="8">4225.0 nmol/h/mg enzyme for dipalmitoyl phosphatidylcholine (at pH 4)</Vmax>
    </kinetics>
    <phDependence>
        <text evidence="5">Optimum pH is 7-8.</text>
    </phDependence>
</comment>
<comment type="subunit">
    <text evidence="1 3 6">Homodimer (By similarity). Interacts with GSTP1; mediates PRDX6 glutathionylation and regeneration (PubMed:15004285). Interacts with APEX1. Interacts with STH. May interact with FAM168B (By similarity). May interact with HTR2A (By similarity).</text>
</comment>
<comment type="subcellular location">
    <subcellularLocation>
        <location evidence="8">Cytoplasm</location>
    </subcellularLocation>
    <subcellularLocation>
        <location evidence="8">Lysosome</location>
    </subcellularLocation>
    <text evidence="8">Also found in lung secretory organelles (lamellar bodies).</text>
</comment>
<comment type="PTM">
    <text evidence="3">Irreversibly inactivated by overoxidation of Cys-47 to sulfinic acid (Cys-SO(2)H) and sulfonic acid (Cys-SO(3)H) forms upon oxidative stress.</text>
</comment>
<comment type="PTM">
    <text evidence="2">Phosphorylation at Thr-177 by MAP kinases increases the phospholipase activity of the enzyme (By similarity). The phosphorylated form exhibits a greater lysophosphatidylcholine acyltransferase activity compared to the non-phosphorylated form (By similarity).</text>
</comment>
<comment type="miscellaneous">
    <text evidence="11">The active site is a conserved redox-active cysteine residue, the peroxidatic cysteine (C(P)), which makes the nucleophilic attack on the peroxide substrate. The peroxide oxidizes the C(P)-SH to cysteine sulfenic acid (C(P)-SOH), which then reacts with another cysteine residue, the resolving cysteine (C(R)), to form a disulfide bridge. The disulfide is subsequently reduced by an appropriate electron donor to complete the catalytic cycle. In this 1-Cys peroxiredoxin, no C(R) is present and C(P) instead forms a disulfide with a cysteine from another protein or with a small thiol molecule. C(P) is reactivated by glutathionylation mediated by glutathione S-transferase Pi, followed by spontaneous reduction of the enzyme with glutathione.</text>
</comment>
<comment type="similarity">
    <text evidence="10">Belongs to the peroxiredoxin family. Prx6 subfamily.</text>
</comment>
<feature type="initiator methionine" description="Removed" evidence="3">
    <location>
        <position position="1"/>
    </location>
</feature>
<feature type="chain" id="PRO_0000135101" description="Peroxiredoxin-6">
    <location>
        <begin position="2"/>
        <end position="224"/>
    </location>
</feature>
<feature type="domain" description="Thioredoxin" evidence="4">
    <location>
        <begin position="5"/>
        <end position="169"/>
    </location>
</feature>
<feature type="region of interest" description="Required and sufficient for targeting to lysosomes and lamellar bodies" evidence="2">
    <location>
        <begin position="31"/>
        <end position="40"/>
    </location>
</feature>
<feature type="active site" description="Cysteine sulfenic acid (-SOH) intermediate; for peroxidase activity" evidence="3">
    <location>
        <position position="47"/>
    </location>
</feature>
<feature type="active site" description="For phospholipase activity" evidence="2">
    <location>
        <position position="140"/>
    </location>
</feature>
<feature type="site" description="Important for phospholipase activity" evidence="2">
    <location>
        <position position="32"/>
    </location>
</feature>
<feature type="modified residue" description="Phosphothreonine" evidence="3">
    <location>
        <position position="44"/>
    </location>
</feature>
<feature type="modified residue" description="N6-acetyllysine" evidence="3">
    <location>
        <position position="63"/>
    </location>
</feature>
<feature type="modified residue" description="Phosphotyrosine" evidence="3">
    <location>
        <position position="89"/>
    </location>
</feature>
<feature type="modified residue" description="Phosphothreonine; by MAPK" evidence="2">
    <location>
        <position position="177"/>
    </location>
</feature>
<feature type="modified residue" description="N6-acetyllysine; alternate" evidence="3">
    <location>
        <position position="209"/>
    </location>
</feature>
<feature type="modified residue" description="N6-succinyllysine; alternate" evidence="1">
    <location>
        <position position="209"/>
    </location>
</feature>
<accession>O77834</accession>
<accession>Q5E9F3</accession>
<organism>
    <name type="scientific">Bos taurus</name>
    <name type="common">Bovine</name>
    <dbReference type="NCBI Taxonomy" id="9913"/>
    <lineage>
        <taxon>Eukaryota</taxon>
        <taxon>Metazoa</taxon>
        <taxon>Chordata</taxon>
        <taxon>Craniata</taxon>
        <taxon>Vertebrata</taxon>
        <taxon>Euteleostomi</taxon>
        <taxon>Mammalia</taxon>
        <taxon>Eutheria</taxon>
        <taxon>Laurasiatheria</taxon>
        <taxon>Artiodactyla</taxon>
        <taxon>Ruminantia</taxon>
        <taxon>Pecora</taxon>
        <taxon>Bovidae</taxon>
        <taxon>Bovinae</taxon>
        <taxon>Bos</taxon>
    </lineage>
</organism>